<protein>
    <recommendedName>
        <fullName evidence="1">Large ribosomal subunit protein uL10</fullName>
    </recommendedName>
    <alternativeName>
        <fullName evidence="2">50S ribosomal protein L10</fullName>
    </alternativeName>
</protein>
<comment type="function">
    <text evidence="1">Forms part of the ribosomal stalk, playing a central role in the interaction of the ribosome with GTP-bound translation factors.</text>
</comment>
<comment type="subunit">
    <text evidence="1">Part of the ribosomal stalk of the 50S ribosomal subunit. The N-terminus interacts with L11 and the large rRNA to form the base of the stalk. The C-terminus forms an elongated spine to which L12 dimers bind in a sequential fashion forming a multimeric L10(L12)X complex.</text>
</comment>
<comment type="similarity">
    <text evidence="1">Belongs to the universal ribosomal protein uL10 family.</text>
</comment>
<proteinExistence type="inferred from homology"/>
<accession>Q2S903</accession>
<evidence type="ECO:0000255" key="1">
    <source>
        <dbReference type="HAMAP-Rule" id="MF_00362"/>
    </source>
</evidence>
<evidence type="ECO:0000305" key="2"/>
<feature type="chain" id="PRO_0000234853" description="Large ribosomal subunit protein uL10">
    <location>
        <begin position="1"/>
        <end position="176"/>
    </location>
</feature>
<reference key="1">
    <citation type="journal article" date="2005" name="Nucleic Acids Res.">
        <title>Genomic blueprint of Hahella chejuensis, a marine microbe producing an algicidal agent.</title>
        <authorList>
            <person name="Jeong H."/>
            <person name="Yim J.H."/>
            <person name="Lee C."/>
            <person name="Choi S.-H."/>
            <person name="Park Y.K."/>
            <person name="Yoon S.H."/>
            <person name="Hur C.-G."/>
            <person name="Kang H.-Y."/>
            <person name="Kim D."/>
            <person name="Lee H.H."/>
            <person name="Park K.H."/>
            <person name="Park S.-H."/>
            <person name="Park H.-S."/>
            <person name="Lee H.K."/>
            <person name="Oh T.K."/>
            <person name="Kim J.F."/>
        </authorList>
    </citation>
    <scope>NUCLEOTIDE SEQUENCE [LARGE SCALE GENOMIC DNA]</scope>
    <source>
        <strain>KCTC 2396</strain>
    </source>
</reference>
<keyword id="KW-1185">Reference proteome</keyword>
<keyword id="KW-0687">Ribonucleoprotein</keyword>
<keyword id="KW-0689">Ribosomal protein</keyword>
<keyword id="KW-0694">RNA-binding</keyword>
<keyword id="KW-0699">rRNA-binding</keyword>
<dbReference type="EMBL" id="CP000155">
    <property type="protein sequence ID" value="ABC32871.1"/>
    <property type="molecule type" value="Genomic_DNA"/>
</dbReference>
<dbReference type="RefSeq" id="WP_011399929.1">
    <property type="nucleotide sequence ID" value="NC_007645.1"/>
</dbReference>
<dbReference type="STRING" id="349521.HCH_06226"/>
<dbReference type="KEGG" id="hch:HCH_06226"/>
<dbReference type="eggNOG" id="COG0244">
    <property type="taxonomic scope" value="Bacteria"/>
</dbReference>
<dbReference type="HOGENOM" id="CLU_092227_0_1_6"/>
<dbReference type="OrthoDB" id="9808307at2"/>
<dbReference type="Proteomes" id="UP000000238">
    <property type="component" value="Chromosome"/>
</dbReference>
<dbReference type="GO" id="GO:1990904">
    <property type="term" value="C:ribonucleoprotein complex"/>
    <property type="evidence" value="ECO:0007669"/>
    <property type="project" value="UniProtKB-KW"/>
</dbReference>
<dbReference type="GO" id="GO:0005840">
    <property type="term" value="C:ribosome"/>
    <property type="evidence" value="ECO:0007669"/>
    <property type="project" value="UniProtKB-KW"/>
</dbReference>
<dbReference type="GO" id="GO:0070180">
    <property type="term" value="F:large ribosomal subunit rRNA binding"/>
    <property type="evidence" value="ECO:0007669"/>
    <property type="project" value="UniProtKB-UniRule"/>
</dbReference>
<dbReference type="GO" id="GO:0006412">
    <property type="term" value="P:translation"/>
    <property type="evidence" value="ECO:0007669"/>
    <property type="project" value="UniProtKB-UniRule"/>
</dbReference>
<dbReference type="CDD" id="cd05797">
    <property type="entry name" value="Ribosomal_L10"/>
    <property type="match status" value="1"/>
</dbReference>
<dbReference type="FunFam" id="3.30.70.1730:FF:000001">
    <property type="entry name" value="50S ribosomal protein L10"/>
    <property type="match status" value="1"/>
</dbReference>
<dbReference type="Gene3D" id="3.30.70.1730">
    <property type="match status" value="1"/>
</dbReference>
<dbReference type="Gene3D" id="6.10.250.290">
    <property type="match status" value="1"/>
</dbReference>
<dbReference type="HAMAP" id="MF_00362">
    <property type="entry name" value="Ribosomal_uL10"/>
    <property type="match status" value="1"/>
</dbReference>
<dbReference type="InterPro" id="IPR001790">
    <property type="entry name" value="Ribosomal_uL10"/>
</dbReference>
<dbReference type="InterPro" id="IPR043141">
    <property type="entry name" value="Ribosomal_uL10-like_sf"/>
</dbReference>
<dbReference type="InterPro" id="IPR022973">
    <property type="entry name" value="Ribosomal_uL10_bac"/>
</dbReference>
<dbReference type="InterPro" id="IPR047865">
    <property type="entry name" value="Ribosomal_uL10_bac_type"/>
</dbReference>
<dbReference type="NCBIfam" id="NF000955">
    <property type="entry name" value="PRK00099.1-1"/>
    <property type="match status" value="1"/>
</dbReference>
<dbReference type="PANTHER" id="PTHR11560">
    <property type="entry name" value="39S RIBOSOMAL PROTEIN L10, MITOCHONDRIAL"/>
    <property type="match status" value="1"/>
</dbReference>
<dbReference type="Pfam" id="PF00466">
    <property type="entry name" value="Ribosomal_L10"/>
    <property type="match status" value="1"/>
</dbReference>
<dbReference type="SUPFAM" id="SSF160369">
    <property type="entry name" value="Ribosomal protein L10-like"/>
    <property type="match status" value="1"/>
</dbReference>
<gene>
    <name evidence="1" type="primary">rplJ</name>
    <name type="ordered locus">HCH_06226</name>
</gene>
<name>RL10_HAHCH</name>
<organism>
    <name type="scientific">Hahella chejuensis (strain KCTC 2396)</name>
    <dbReference type="NCBI Taxonomy" id="349521"/>
    <lineage>
        <taxon>Bacteria</taxon>
        <taxon>Pseudomonadati</taxon>
        <taxon>Pseudomonadota</taxon>
        <taxon>Gammaproteobacteria</taxon>
        <taxon>Oceanospirillales</taxon>
        <taxon>Hahellaceae</taxon>
        <taxon>Hahella</taxon>
    </lineage>
</organism>
<sequence length="176" mass="19148">MAIRLEDKKAIVAEVNETASKALSLVIADYRGVTSNKMSELRAKARAESVSLRVVRNTLARRAVEGTEYECAREAFVGPTILAFSMEDPGAAARLLKDYAKENDKFEIKALAVGGEMLGADQIDRLAKLPTRDQALAMLMSVMQAPVTKLARTLNEIPSKVTRAVAAVRDKKQEAA</sequence>